<reference key="1">
    <citation type="journal article" date="2006" name="Science">
        <title>Large-scale sequence analysis of avian influenza isolates.</title>
        <authorList>
            <person name="Obenauer J.C."/>
            <person name="Denson J."/>
            <person name="Mehta P.K."/>
            <person name="Su X."/>
            <person name="Mukatira S."/>
            <person name="Finkelstein D.B."/>
            <person name="Xu X."/>
            <person name="Wang J."/>
            <person name="Ma J."/>
            <person name="Fan Y."/>
            <person name="Rakestraw K.M."/>
            <person name="Webster R.G."/>
            <person name="Hoffmann E."/>
            <person name="Krauss S."/>
            <person name="Zheng J."/>
            <person name="Zhang Z."/>
            <person name="Naeve C.W."/>
        </authorList>
    </citation>
    <scope>NUCLEOTIDE SEQUENCE [GENOMIC RNA]</scope>
</reference>
<proteinExistence type="inferred from homology"/>
<organismHost>
    <name type="scientific">Aves</name>
    <dbReference type="NCBI Taxonomy" id="8782"/>
</organismHost>
<name>NEP_I49A1</name>
<sequence length="121" mass="14314">MDSNTITSFQDILQRMSKMQLESSSVDLNGMITQFERLKIYRDSLGESVMRMGDLHSLQNRNATWREELSQKFEEIRWLIAECRNILTKTENSFEQITFLQALQLLLEVESEIRTFSFQLI</sequence>
<comment type="function">
    <text evidence="1">Mediates the nuclear export of encapsidated genomic RNAs (ribonucleoproteins, RNPs). Acts as an adapter between viral RNPs complexes and the nuclear export machinery of the cell. Possesses no intrinsic RNA-binding activity, but includes a C-terminal M1-binding domain. This domain is believed to allow recognition of RNPs bound to the protein M1. Since protein M1 is not available in large quantities before late stages of infection, such an indirect recognition mechanism probably ensures that genomic RNPs are not exported from the host nucleus until sufficient quantities of viral mRNA and progeny genomic RNA have been synthesized. Furthermore, the RNPs enter the host cytoplasm only when associated with the M1 protein that is necessary to guide them to the plasma membrane. May down-regulate viral RNA synthesis when overproduced.</text>
</comment>
<comment type="subunit">
    <text evidence="1">Interacts with protein M1. May interact with host nucleoporin RAB/HRB and exportin XPO1/CRM1.</text>
</comment>
<comment type="subcellular location">
    <subcellularLocation>
        <location evidence="1">Virion</location>
    </subcellularLocation>
    <subcellularLocation>
        <location evidence="1">Host nucleus</location>
    </subcellularLocation>
</comment>
<comment type="alternative products">
    <event type="alternative splicing"/>
    <isoform>
        <id>Q0A443-1</id>
        <name>NEP</name>
        <name>NS2</name>
        <sequence type="displayed"/>
    </isoform>
    <isoform>
        <id>Q0A442-1</id>
        <name>NS1</name>
        <sequence type="external"/>
    </isoform>
</comment>
<comment type="similarity">
    <text evidence="1">Belongs to the influenza viruses NEP family.</text>
</comment>
<organism>
    <name type="scientific">Influenza A virus (strain A/Duck/Germany/1949 H10N7)</name>
    <dbReference type="NCBI Taxonomy" id="382838"/>
    <lineage>
        <taxon>Viruses</taxon>
        <taxon>Riboviria</taxon>
        <taxon>Orthornavirae</taxon>
        <taxon>Negarnaviricota</taxon>
        <taxon>Polyploviricotina</taxon>
        <taxon>Insthoviricetes</taxon>
        <taxon>Articulavirales</taxon>
        <taxon>Orthomyxoviridae</taxon>
        <taxon>Alphainfluenzavirus</taxon>
        <taxon>Alphainfluenzavirus influenzae</taxon>
        <taxon>Influenza A virus</taxon>
    </lineage>
</organism>
<evidence type="ECO:0000255" key="1">
    <source>
        <dbReference type="HAMAP-Rule" id="MF_04067"/>
    </source>
</evidence>
<accession>Q0A443</accession>
<feature type="chain" id="PRO_0000324194" description="Nuclear export protein">
    <location>
        <begin position="1"/>
        <end position="121"/>
    </location>
</feature>
<feature type="short sequence motif" description="Nuclear export signal" evidence="1">
    <location>
        <begin position="12"/>
        <end position="21"/>
    </location>
</feature>
<feature type="short sequence motif" description="Nuclear export signal" evidence="1">
    <location>
        <begin position="85"/>
        <end position="94"/>
    </location>
</feature>
<dbReference type="EMBL" id="CY014675">
    <property type="protein sequence ID" value="ABI84540.1"/>
    <property type="molecule type" value="Genomic_RNA"/>
</dbReference>
<dbReference type="SMR" id="Q0A443"/>
<dbReference type="Proteomes" id="UP000008217">
    <property type="component" value="Genome"/>
</dbReference>
<dbReference type="GO" id="GO:0042025">
    <property type="term" value="C:host cell nucleus"/>
    <property type="evidence" value="ECO:0007669"/>
    <property type="project" value="UniProtKB-SubCell"/>
</dbReference>
<dbReference type="GO" id="GO:0044423">
    <property type="term" value="C:virion component"/>
    <property type="evidence" value="ECO:0007669"/>
    <property type="project" value="UniProtKB-UniRule"/>
</dbReference>
<dbReference type="GO" id="GO:0039675">
    <property type="term" value="P:exit of virus from host cell nucleus through nuclear pore"/>
    <property type="evidence" value="ECO:0007669"/>
    <property type="project" value="UniProtKB-UniRule"/>
</dbReference>
<dbReference type="Gene3D" id="1.10.287.230">
    <property type="match status" value="1"/>
</dbReference>
<dbReference type="HAMAP" id="MF_04067">
    <property type="entry name" value="INFV_NEP"/>
    <property type="match status" value="1"/>
</dbReference>
<dbReference type="InterPro" id="IPR000968">
    <property type="entry name" value="Flu_NS2"/>
</dbReference>
<dbReference type="Pfam" id="PF00601">
    <property type="entry name" value="Flu_NS2"/>
    <property type="match status" value="1"/>
</dbReference>
<dbReference type="SUPFAM" id="SSF101156">
    <property type="entry name" value="Nonstructural protein ns2, Nep, M1-binding domain"/>
    <property type="match status" value="1"/>
</dbReference>
<keyword id="KW-0025">Alternative splicing</keyword>
<keyword id="KW-1048">Host nucleus</keyword>
<keyword id="KW-0945">Host-virus interaction</keyword>
<keyword id="KW-0813">Transport</keyword>
<keyword id="KW-0946">Virion</keyword>
<protein>
    <recommendedName>
        <fullName evidence="1">Nuclear export protein</fullName>
        <shortName evidence="1">NEP</shortName>
    </recommendedName>
    <alternativeName>
        <fullName evidence="1">Non-structural protein 2</fullName>
        <shortName evidence="1">NS2</shortName>
    </alternativeName>
</protein>
<gene>
    <name evidence="1" type="primary">NS</name>
</gene>